<evidence type="ECO:0000255" key="1">
    <source>
        <dbReference type="HAMAP-Rule" id="MF_01042"/>
    </source>
</evidence>
<comment type="function">
    <text evidence="1">Acts as a ribosome collision sensor. Detects stalled/collided disomes (pairs of ribosomes where the leading ribosome is stalled and a second ribosome has collided with it) and endonucleolytically cleaves mRNA at the 5' boundary of the stalled ribosome. Stalled/collided disomes form a new interface (primarily via the 30S subunits) that binds SmrB. Cleaved mRNA becomes available for tmRNA ligation, leading to ribosomal subunit dissociation and rescue of stalled ribosomes.</text>
</comment>
<comment type="subunit">
    <text evidence="1">Associates with collided ribosomes, but not with correctly translating polysomes.</text>
</comment>
<comment type="similarity">
    <text evidence="1">Belongs to the SmrB family.</text>
</comment>
<reference key="1">
    <citation type="journal article" date="2001" name="Nature">
        <title>Complete genome sequence of Salmonella enterica serovar Typhimurium LT2.</title>
        <authorList>
            <person name="McClelland M."/>
            <person name="Sanderson K.E."/>
            <person name="Spieth J."/>
            <person name="Clifton S.W."/>
            <person name="Latreille P."/>
            <person name="Courtney L."/>
            <person name="Porwollik S."/>
            <person name="Ali J."/>
            <person name="Dante M."/>
            <person name="Du F."/>
            <person name="Hou S."/>
            <person name="Layman D."/>
            <person name="Leonard S."/>
            <person name="Nguyen C."/>
            <person name="Scott K."/>
            <person name="Holmes A."/>
            <person name="Grewal N."/>
            <person name="Mulvaney E."/>
            <person name="Ryan E."/>
            <person name="Sun H."/>
            <person name="Florea L."/>
            <person name="Miller W."/>
            <person name="Stoneking T."/>
            <person name="Nhan M."/>
            <person name="Waterston R."/>
            <person name="Wilson R.K."/>
        </authorList>
    </citation>
    <scope>NUCLEOTIDE SEQUENCE [LARGE SCALE GENOMIC DNA]</scope>
    <source>
        <strain>LT2 / SGSC1412 / ATCC 700720</strain>
    </source>
</reference>
<name>SMRB_SALTY</name>
<accession>P67246</accession>
<accession>Q8XFE8</accession>
<organism>
    <name type="scientific">Salmonella typhimurium (strain LT2 / SGSC1412 / ATCC 700720)</name>
    <dbReference type="NCBI Taxonomy" id="99287"/>
    <lineage>
        <taxon>Bacteria</taxon>
        <taxon>Pseudomonadati</taxon>
        <taxon>Pseudomonadota</taxon>
        <taxon>Gammaproteobacteria</taxon>
        <taxon>Enterobacterales</taxon>
        <taxon>Enterobacteriaceae</taxon>
        <taxon>Salmonella</taxon>
    </lineage>
</organism>
<protein>
    <recommendedName>
        <fullName evidence="1">Ribosome rescue factor SmrB</fullName>
        <ecNumber evidence="1">3.1.-.-</ecNumber>
    </recommendedName>
</protein>
<proteinExistence type="inferred from homology"/>
<dbReference type="EC" id="3.1.-.-" evidence="1"/>
<dbReference type="EMBL" id="AE006468">
    <property type="protein sequence ID" value="AAL21287.1"/>
    <property type="molecule type" value="Genomic_DNA"/>
</dbReference>
<dbReference type="RefSeq" id="WP_000730794.1">
    <property type="nucleotide sequence ID" value="NC_003197.2"/>
</dbReference>
<dbReference type="SMR" id="P67246"/>
<dbReference type="STRING" id="99287.STM2386"/>
<dbReference type="PaxDb" id="99287-STM2386"/>
<dbReference type="KEGG" id="stm:STM2386"/>
<dbReference type="PATRIC" id="fig|99287.12.peg.2525"/>
<dbReference type="HOGENOM" id="CLU_055978_4_0_6"/>
<dbReference type="OMA" id="CIMHGHG"/>
<dbReference type="PhylomeDB" id="P67246"/>
<dbReference type="BioCyc" id="SENT99287:STM2386-MONOMER"/>
<dbReference type="Proteomes" id="UP000001014">
    <property type="component" value="Chromosome"/>
</dbReference>
<dbReference type="GO" id="GO:0004521">
    <property type="term" value="F:RNA endonuclease activity"/>
    <property type="evidence" value="ECO:0007669"/>
    <property type="project" value="UniProtKB-UniRule"/>
</dbReference>
<dbReference type="GO" id="GO:0019843">
    <property type="term" value="F:rRNA binding"/>
    <property type="evidence" value="ECO:0007669"/>
    <property type="project" value="UniProtKB-UniRule"/>
</dbReference>
<dbReference type="GO" id="GO:0072344">
    <property type="term" value="P:rescue of stalled ribosome"/>
    <property type="evidence" value="ECO:0007669"/>
    <property type="project" value="UniProtKB-UniRule"/>
</dbReference>
<dbReference type="Gene3D" id="3.30.1370.110">
    <property type="match status" value="1"/>
</dbReference>
<dbReference type="HAMAP" id="MF_01042">
    <property type="entry name" value="SmrB"/>
    <property type="match status" value="1"/>
</dbReference>
<dbReference type="InterPro" id="IPR002625">
    <property type="entry name" value="Smr_dom"/>
</dbReference>
<dbReference type="InterPro" id="IPR036063">
    <property type="entry name" value="Smr_dom_sf"/>
</dbReference>
<dbReference type="InterPro" id="IPR022990">
    <property type="entry name" value="SmrB-like"/>
</dbReference>
<dbReference type="NCBIfam" id="NF003432">
    <property type="entry name" value="PRK04946.1"/>
    <property type="match status" value="1"/>
</dbReference>
<dbReference type="PANTHER" id="PTHR35562">
    <property type="entry name" value="DNA ENDONUCLEASE SMRA-RELATED"/>
    <property type="match status" value="1"/>
</dbReference>
<dbReference type="PANTHER" id="PTHR35562:SF1">
    <property type="entry name" value="UPF0115 PROTEIN YFCN"/>
    <property type="match status" value="1"/>
</dbReference>
<dbReference type="Pfam" id="PF01713">
    <property type="entry name" value="Smr"/>
    <property type="match status" value="1"/>
</dbReference>
<dbReference type="SMART" id="SM00463">
    <property type="entry name" value="SMR"/>
    <property type="match status" value="1"/>
</dbReference>
<dbReference type="SUPFAM" id="SSF160443">
    <property type="entry name" value="SMR domain-like"/>
    <property type="match status" value="1"/>
</dbReference>
<dbReference type="PROSITE" id="PS50828">
    <property type="entry name" value="SMR"/>
    <property type="match status" value="1"/>
</dbReference>
<feature type="chain" id="PRO_0000214559" description="Ribosome rescue factor SmrB">
    <location>
        <begin position="1"/>
        <end position="183"/>
    </location>
</feature>
<feature type="domain" description="Smr" evidence="1">
    <location>
        <begin position="98"/>
        <end position="173"/>
    </location>
</feature>
<sequence length="183" mass="21177">MKKKTSLSEEDQALFRQLMVGTRKIKQDTIVHRPLRKKITEVPTRRLIQEQADASHYFSDEFQPLLNTEGPVKYVREDVSHFELKKMRRGDYSPELFLDLHGLTQLQAKQELGALIAACRREHIFCACVMHGHGKHILKQQTPLWLAQHPHVMAFHQAPKEYGGDAALLVLIEVEEWQPPELP</sequence>
<gene>
    <name evidence="1" type="primary">smrB</name>
    <name type="ordered locus">STM2386</name>
</gene>
<keyword id="KW-0255">Endonuclease</keyword>
<keyword id="KW-0378">Hydrolase</keyword>
<keyword id="KW-0540">Nuclease</keyword>
<keyword id="KW-1185">Reference proteome</keyword>
<keyword id="KW-0694">RNA-binding</keyword>
<keyword id="KW-0699">rRNA-binding</keyword>